<organism>
    <name type="scientific">Mus musculus</name>
    <name type="common">Mouse</name>
    <dbReference type="NCBI Taxonomy" id="10090"/>
    <lineage>
        <taxon>Eukaryota</taxon>
        <taxon>Metazoa</taxon>
        <taxon>Chordata</taxon>
        <taxon>Craniata</taxon>
        <taxon>Vertebrata</taxon>
        <taxon>Euteleostomi</taxon>
        <taxon>Mammalia</taxon>
        <taxon>Eutheria</taxon>
        <taxon>Euarchontoglires</taxon>
        <taxon>Glires</taxon>
        <taxon>Rodentia</taxon>
        <taxon>Myomorpha</taxon>
        <taxon>Muroidea</taxon>
        <taxon>Muridae</taxon>
        <taxon>Murinae</taxon>
        <taxon>Mus</taxon>
        <taxon>Mus</taxon>
    </lineage>
</organism>
<keyword id="KW-0007">Acetylation</keyword>
<keyword id="KW-0025">Alternative splicing</keyword>
<keyword id="KW-0227">DNA damage</keyword>
<keyword id="KW-0234">DNA repair</keyword>
<keyword id="KW-0378">Hydrolase</keyword>
<keyword id="KW-0496">Mitochondrion</keyword>
<keyword id="KW-0539">Nucleus</keyword>
<keyword id="KW-0597">Phosphoprotein</keyword>
<keyword id="KW-1185">Reference proteome</keyword>
<comment type="function">
    <text evidence="1 5 6 7 8 9">Uracil-DNA glycosylase that hydrolyzes the N-glycosidic bond between uracil and deoxyribose in single- and double-stranded DNA (ssDNA and dsDNA) to release a free uracil residue and form an abasic (apurinic/apyrimidinic; AP) site. Excises uracil residues arising as a result of misincorporation of dUMP residues by DNA polymerase during replication or due to spontaneous or enzymatic deamination of cytosine (PubMed:22521144, PubMed:9016624). Mediates error-free base excision repair (BER) of uracil at replication forks. According to the model, it is recruited by PCNA to S-phase replication forks to remove misincorporated uracil at U:A base mispairs in nascent DNA strands. Via trimeric RPA it is recruited to ssDNA stretches ahead of the polymerase to allow detection and excision of deaminated cytosines prior to replication. The resultant AP sites temporarily stall replication, allowing time to repair the lesion (By similarity). Mediates mutagenic uracil processing involved in antibody affinity maturation. Processes AICDA-induced U:G base mispairs at variable Ig regions leading to the generation of transversion mutations (PubMed:12401169, PubMed:21151102). Additionally, it operates at switch sites of Ig constant regions where it mediates Ig isotype class switch recombination. Excises AICDA-induced uracil residues forming AP sites that are subsequently nicked by APEX1 endonuclease. The accumulation of staggered nicks in opposite strands results in double strand DNA breaks that are finally resolved via non-homologous end joining repair pathway (PubMed:12401169, PubMed:16103411, PubMed:21151102).</text>
</comment>
<comment type="catalytic activity">
    <reaction evidence="2">
        <text>Hydrolyzes single-stranded DNA or mismatched double-stranded DNA and polynucleotides, releasing free uracil.</text>
        <dbReference type="EC" id="3.2.2.27"/>
    </reaction>
</comment>
<comment type="catalytic activity">
    <reaction evidence="8 9">
        <text>a 2'-deoxyuridine in single-stranded DNA + H2O = a 2'-deoxyribose 5'-monophosphate in single-stranded DNA + uracil</text>
        <dbReference type="Rhea" id="RHEA:81459"/>
        <dbReference type="Rhea" id="RHEA-COMP:12847"/>
        <dbReference type="Rhea" id="RHEA-COMP:19684"/>
        <dbReference type="ChEBI" id="CHEBI:15377"/>
        <dbReference type="ChEBI" id="CHEBI:17568"/>
        <dbReference type="ChEBI" id="CHEBI:133902"/>
        <dbReference type="ChEBI" id="CHEBI:139095"/>
    </reaction>
    <physiologicalReaction direction="left-to-right" evidence="9">
        <dbReference type="Rhea" id="RHEA:81460"/>
    </physiologicalReaction>
</comment>
<comment type="catalytic activity">
    <reaction evidence="8">
        <text>a 2'-deoxyuridine in double-stranded DNA + H2O = a 2'-deoxyribose 5'-monophosphate in double-stranded DNA + uracil</text>
        <dbReference type="Rhea" id="RHEA:81455"/>
        <dbReference type="Rhea" id="RHEA-COMP:14231"/>
        <dbReference type="Rhea" id="RHEA-COMP:17071"/>
        <dbReference type="ChEBI" id="CHEBI:15377"/>
        <dbReference type="ChEBI" id="CHEBI:17568"/>
        <dbReference type="ChEBI" id="CHEBI:133902"/>
        <dbReference type="ChEBI" id="CHEBI:139095"/>
    </reaction>
    <physiologicalReaction direction="left-to-right" evidence="8">
        <dbReference type="Rhea" id="RHEA:81456"/>
    </physiologicalReaction>
</comment>
<comment type="subunit">
    <text evidence="1">Interacts with RPA2 subunit of the RPA trimer; this interaction mediates UNG2 recruitment to RPA-coated single-stranded DNA at stalled replication forks. Interacts with PCNA; this interaction mediates UNG2 recruitment to S-phase replication foci. Interacts (via N-terminus) with FAM72A.</text>
</comment>
<comment type="subcellular location">
    <molecule>Isoform 1</molecule>
    <subcellularLocation>
        <location evidence="16">Mitochondrion</location>
    </subcellularLocation>
    <subcellularLocation>
        <location evidence="4">Nucleus</location>
    </subcellularLocation>
</comment>
<comment type="subcellular location">
    <molecule>Isoform 2</molecule>
    <subcellularLocation>
        <location evidence="4">Nucleus</location>
    </subcellularLocation>
</comment>
<comment type="alternative products">
    <event type="alternative splicing"/>
    <isoform>
        <id>P97931-1</id>
        <name>2</name>
        <name>UNG2</name>
        <sequence type="displayed"/>
    </isoform>
    <isoform>
        <id>P97931-2</id>
        <name>1</name>
        <name>UNG1</name>
        <sequence type="described" ref="VSP_008514"/>
    </isoform>
</comment>
<comment type="PTM">
    <molecule>Isoform 1</molecule>
    <text evidence="1">Processed by cleavage of a transit peptide.</text>
</comment>
<comment type="similarity">
    <text evidence="2">Belongs to the uracil-DNA glycosylase (UDG) superfamily. UNG family.</text>
</comment>
<proteinExistence type="evidence at protein level"/>
<gene>
    <name type="primary">Ung</name>
    <name type="synonym">Ung1</name>
</gene>
<feature type="chain" id="PRO_0000176174" description="Uracil-DNA glycosylase">
    <location>
        <begin position="1"/>
        <end position="306"/>
    </location>
</feature>
<feature type="region of interest" description="Interaction with FAM72A" evidence="1">
    <location>
        <begin position="1"/>
        <end position="25"/>
    </location>
</feature>
<feature type="region of interest" description="Disordered" evidence="3">
    <location>
        <begin position="11"/>
        <end position="31"/>
    </location>
</feature>
<feature type="region of interest" description="Interaction with RPA2" evidence="1">
    <location>
        <begin position="66"/>
        <end position="81"/>
    </location>
</feature>
<feature type="short sequence motif" description="Important for nuclear sorting" evidence="1">
    <location>
        <begin position="17"/>
        <end position="19"/>
    </location>
</feature>
<feature type="active site" description="Proton acceptor" evidence="2">
    <location>
        <position position="147"/>
    </location>
</feature>
<feature type="binding site" evidence="1">
    <location>
        <position position="146"/>
    </location>
    <ligand>
        <name>uracil</name>
        <dbReference type="ChEBI" id="CHEBI:17568"/>
    </ligand>
</feature>
<feature type="binding site" evidence="1">
    <location>
        <position position="150"/>
    </location>
    <ligand>
        <name>dsDNA</name>
        <dbReference type="ChEBI" id="CHEBI:4705"/>
    </ligand>
    <ligandPart>
        <name>a 2'-deoxyribose 5'-monophosphate residue</name>
        <dbReference type="ChEBI" id="CHEBI:139095"/>
    </ligandPart>
</feature>
<feature type="binding site" evidence="1">
    <location>
        <position position="160"/>
    </location>
    <ligand>
        <name>uracil</name>
        <dbReference type="ChEBI" id="CHEBI:17568"/>
    </ligand>
</feature>
<feature type="binding site" evidence="1">
    <location>
        <position position="171"/>
    </location>
    <ligand>
        <name>dsDNA</name>
        <dbReference type="ChEBI" id="CHEBI:4705"/>
    </ligand>
    <ligandPart>
        <name>a 2'-deoxyribose 5'-monophosphate residue</name>
        <dbReference type="ChEBI" id="CHEBI:139095"/>
    </ligandPart>
</feature>
<feature type="binding site" evidence="1">
    <location>
        <position position="206"/>
    </location>
    <ligand>
        <name>uracil</name>
        <dbReference type="ChEBI" id="CHEBI:17568"/>
    </ligand>
</feature>
<feature type="binding site" evidence="1">
    <location>
        <position position="249"/>
    </location>
    <ligand>
        <name>dsDNA</name>
        <dbReference type="ChEBI" id="CHEBI:4705"/>
    </ligand>
    <ligandPart>
        <name>a 2'-deoxyribose 5'-monophosphate residue</name>
        <dbReference type="ChEBI" id="CHEBI:139095"/>
    </ligandPart>
</feature>
<feature type="binding site" evidence="1">
    <location>
        <position position="270"/>
    </location>
    <ligand>
        <name>dsDNA</name>
        <dbReference type="ChEBI" id="CHEBI:4705"/>
    </ligand>
    <ligandPart>
        <name>a 2'-deoxyribose 5'-monophosphate residue</name>
        <dbReference type="ChEBI" id="CHEBI:139095"/>
    </ligandPart>
</feature>
<feature type="binding site" evidence="1">
    <location>
        <position position="270"/>
    </location>
    <ligand>
        <name>uracil</name>
        <dbReference type="ChEBI" id="CHEBI:17568"/>
    </ligand>
</feature>
<feature type="binding site" evidence="1">
    <location>
        <position position="272"/>
    </location>
    <ligand>
        <name>dsDNA</name>
        <dbReference type="ChEBI" id="CHEBI:4705"/>
    </ligand>
    <ligandPart>
        <name>a 2'-deoxyribose 5'-monophosphate residue</name>
        <dbReference type="ChEBI" id="CHEBI:139095"/>
    </ligandPart>
</feature>
<feature type="binding site" evidence="1">
    <location>
        <position position="278"/>
    </location>
    <ligand>
        <name>dsDNA</name>
        <dbReference type="ChEBI" id="CHEBI:4705"/>
    </ligand>
    <ligandPart>
        <name>a 2'-deoxyribose 5'-monophosphate residue</name>
        <dbReference type="ChEBI" id="CHEBI:139095"/>
    </ligandPart>
</feature>
<feature type="site" description="Essential for recruitment to S-phase replication foci" evidence="1">
    <location>
        <position position="10"/>
    </location>
</feature>
<feature type="site" description="Essential for recruitment to S-phase replication foci" evidence="1">
    <location>
        <position position="11"/>
    </location>
</feature>
<feature type="site" description="Essential for recruitment to stalled replication forks" evidence="1">
    <location>
        <position position="70"/>
    </location>
</feature>
<feature type="site" description="Essential for recruitment to stalled replication forks" evidence="1">
    <location>
        <position position="77"/>
    </location>
</feature>
<feature type="site" description="Essential for recruitment to nuclear foci" evidence="1">
    <location>
        <position position="81"/>
    </location>
</feature>
<feature type="modified residue" description="Phosphoserine" evidence="1">
    <location>
        <position position="12"/>
    </location>
</feature>
<feature type="modified residue" description="Phosphoserine" evidence="1">
    <location>
        <position position="23"/>
    </location>
</feature>
<feature type="modified residue" description="Phosphoserine" evidence="17">
    <location>
        <position position="43"/>
    </location>
</feature>
<feature type="modified residue" description="Phosphoserine" evidence="1">
    <location>
        <position position="57"/>
    </location>
</feature>
<feature type="modified residue" description="N6-acetyllysine" evidence="1">
    <location>
        <position position="288"/>
    </location>
</feature>
<feature type="splice variant" id="VSP_008514" description="In isoform 1." evidence="10 11 12 13 14">
    <original>MIGQKTLYSFFSPTPTGKRTTRSPEPVPGSGVAAEIGGDAV</original>
    <variation>MGVLGRRSLRLARRAGLRSLTPNPDSDSRQ</variation>
    <location>
        <begin position="1"/>
        <end position="41"/>
    </location>
</feature>
<feature type="mutagenesis site" description="Confers resistance to activity reduction by RPA trimer." evidence="8">
    <original>R</original>
    <variation>D</variation>
    <location>
        <position position="66"/>
    </location>
</feature>
<feature type="mutagenesis site" description="Confers resistance to activity reduction by RPA trimer." evidence="8">
    <original>R</original>
    <variation>D</variation>
    <location>
        <position position="69"/>
    </location>
</feature>
<feature type="mutagenesis site" description="Confers resistance to activity reduction by RPA trimer." evidence="8">
    <original>N</original>
    <variation>D</variation>
    <location>
        <position position="70"/>
    </location>
</feature>
<feature type="mutagenesis site" description="Confers resistance to activity reduction by RPA trimer." evidence="8">
    <original>K</original>
    <variation>D</variation>
    <location>
        <position position="71"/>
    </location>
</feature>
<feature type="mutagenesis site" description="Confers resistance to activity reduction by RPA trimer." evidence="8">
    <original>R</original>
    <variation>D</variation>
    <location>
        <position position="77"/>
    </location>
</feature>
<feature type="mutagenesis site" description="Confers resistance to activity reduction by RPA trimer." evidence="8">
    <original>R</original>
    <variation>D</variation>
    <location>
        <position position="81"/>
    </location>
</feature>
<feature type="sequence conflict" description="In Ref. 2; CAA67489/CAA70168." evidence="15" ref="2">
    <original>H</original>
    <variation>Y</variation>
    <location>
        <position position="277"/>
    </location>
</feature>
<sequence>MIGQKTLYSFFSPTPTGKRTTRSPEPVPGSGVAAEIGGDAVASPAKKARVEQNEQGSPLSAEQLVRIQRNKAAALLRLAARNVPAGFGESWKQQLCGEFGKPYFVKLMGFVAEERNHHKVYPPPEQVFTWTQMCDIRDVKVVILGQDPYHGPNQAHGLCFSVQRPVPPPPSLENIFKELSTDIDGFVHPGHGDLSGWARQGVLLLNAVLTVRAHQANSHKERGWEQFTDAVVSWLNQNLSGLVFLLWGSYAQKKGSVIDRKRHHVLQTAHPSPLSVHRGFLGCRHFSKANELLQKSGKKPINWKEL</sequence>
<accession>P97931</accession>
<accession>P97285</accession>
<accession>P97509</accession>
<accession>Q7TPW8</accession>
<accession>Q9JIW8</accession>
<evidence type="ECO:0000250" key="1">
    <source>
        <dbReference type="UniProtKB" id="P13051"/>
    </source>
</evidence>
<evidence type="ECO:0000255" key="2">
    <source>
        <dbReference type="HAMAP-Rule" id="MF_03166"/>
    </source>
</evidence>
<evidence type="ECO:0000256" key="3">
    <source>
        <dbReference type="SAM" id="MobiDB-lite"/>
    </source>
</evidence>
<evidence type="ECO:0000269" key="4">
    <source>
    </source>
</evidence>
<evidence type="ECO:0000269" key="5">
    <source>
    </source>
</evidence>
<evidence type="ECO:0000269" key="6">
    <source>
    </source>
</evidence>
<evidence type="ECO:0000269" key="7">
    <source>
    </source>
</evidence>
<evidence type="ECO:0000269" key="8">
    <source>
    </source>
</evidence>
<evidence type="ECO:0000269" key="9">
    <source>
    </source>
</evidence>
<evidence type="ECO:0000303" key="10">
    <source>
    </source>
</evidence>
<evidence type="ECO:0000303" key="11">
    <source>
    </source>
</evidence>
<evidence type="ECO:0000303" key="12">
    <source>
    </source>
</evidence>
<evidence type="ECO:0000303" key="13">
    <source>
    </source>
</evidence>
<evidence type="ECO:0000303" key="14">
    <source>
    </source>
</evidence>
<evidence type="ECO:0000305" key="15"/>
<evidence type="ECO:0000305" key="16">
    <source>
    </source>
</evidence>
<evidence type="ECO:0007744" key="17">
    <source>
    </source>
</evidence>
<reference key="1">
    <citation type="journal article" date="1997" name="Gene">
        <title>The mouse uracil-DNA glycosylase gene: isolation of cDNA and genomic clones and mapping ung to mouse chromosome 5.</title>
        <authorList>
            <person name="Svendsen P.C."/>
            <person name="Yee H.A."/>
            <person name="Winkfein R.J."/>
            <person name="van de Sande J.H."/>
        </authorList>
    </citation>
    <scope>NUCLEOTIDE SEQUENCE [GENOMIC DNA / MRNA] (ISOFORM 1)</scope>
</reference>
<reference key="2">
    <citation type="journal article" date="1997" name="Nucleic Acids Res.">
        <title>Nuclear and mitochondrial uracil-DNA glycosylases are generated by alternative splicing and transcription from different positions in the UNG gene.</title>
        <authorList>
            <person name="Nilsen H."/>
            <person name="Solum K."/>
            <person name="Haug T."/>
            <person name="Krokan H.E."/>
        </authorList>
    </citation>
    <scope>NUCLEOTIDE SEQUENCE [MRNA] (ISOFORMS 1 AND 2)</scope>
    <scope>FUNCTION</scope>
    <scope>CATALYTIC ACTIVITY</scope>
</reference>
<reference key="3">
    <citation type="journal article" date="2000" name="Nucleic Acids Res.">
        <title>Analysis of uracil-DNA glycosylases from the murine Ung gene reveals differential expression in tissues and in embryonic development and a subcellular sorting pattern that differs from the human homologues.</title>
        <authorList>
            <person name="Nilsen H."/>
            <person name="Steinsbekk K.S."/>
            <person name="Otterlei M."/>
            <person name="Slupphaug G."/>
            <person name="Aas P.A."/>
            <person name="Krokan H.E."/>
        </authorList>
    </citation>
    <scope>NUCLEOTIDE SEQUENCE [MRNA] (ISOFORM 1)</scope>
    <scope>SUBCELLULAR LOCATION (ISOFORMS 1 AND 2)</scope>
    <source>
        <strain>129/Sv</strain>
    </source>
</reference>
<reference key="4">
    <citation type="journal article" date="2005" name="Science">
        <title>The transcriptional landscape of the mammalian genome.</title>
        <authorList>
            <person name="Carninci P."/>
            <person name="Kasukawa T."/>
            <person name="Katayama S."/>
            <person name="Gough J."/>
            <person name="Frith M.C."/>
            <person name="Maeda N."/>
            <person name="Oyama R."/>
            <person name="Ravasi T."/>
            <person name="Lenhard B."/>
            <person name="Wells C."/>
            <person name="Kodzius R."/>
            <person name="Shimokawa K."/>
            <person name="Bajic V.B."/>
            <person name="Brenner S.E."/>
            <person name="Batalov S."/>
            <person name="Forrest A.R."/>
            <person name="Zavolan M."/>
            <person name="Davis M.J."/>
            <person name="Wilming L.G."/>
            <person name="Aidinis V."/>
            <person name="Allen J.E."/>
            <person name="Ambesi-Impiombato A."/>
            <person name="Apweiler R."/>
            <person name="Aturaliya R.N."/>
            <person name="Bailey T.L."/>
            <person name="Bansal M."/>
            <person name="Baxter L."/>
            <person name="Beisel K.W."/>
            <person name="Bersano T."/>
            <person name="Bono H."/>
            <person name="Chalk A.M."/>
            <person name="Chiu K.P."/>
            <person name="Choudhary V."/>
            <person name="Christoffels A."/>
            <person name="Clutterbuck D.R."/>
            <person name="Crowe M.L."/>
            <person name="Dalla E."/>
            <person name="Dalrymple B.P."/>
            <person name="de Bono B."/>
            <person name="Della Gatta G."/>
            <person name="di Bernardo D."/>
            <person name="Down T."/>
            <person name="Engstrom P."/>
            <person name="Fagiolini M."/>
            <person name="Faulkner G."/>
            <person name="Fletcher C.F."/>
            <person name="Fukushima T."/>
            <person name="Furuno M."/>
            <person name="Futaki S."/>
            <person name="Gariboldi M."/>
            <person name="Georgii-Hemming P."/>
            <person name="Gingeras T.R."/>
            <person name="Gojobori T."/>
            <person name="Green R.E."/>
            <person name="Gustincich S."/>
            <person name="Harbers M."/>
            <person name="Hayashi Y."/>
            <person name="Hensch T.K."/>
            <person name="Hirokawa N."/>
            <person name="Hill D."/>
            <person name="Huminiecki L."/>
            <person name="Iacono M."/>
            <person name="Ikeo K."/>
            <person name="Iwama A."/>
            <person name="Ishikawa T."/>
            <person name="Jakt M."/>
            <person name="Kanapin A."/>
            <person name="Katoh M."/>
            <person name="Kawasawa Y."/>
            <person name="Kelso J."/>
            <person name="Kitamura H."/>
            <person name="Kitano H."/>
            <person name="Kollias G."/>
            <person name="Krishnan S.P."/>
            <person name="Kruger A."/>
            <person name="Kummerfeld S.K."/>
            <person name="Kurochkin I.V."/>
            <person name="Lareau L.F."/>
            <person name="Lazarevic D."/>
            <person name="Lipovich L."/>
            <person name="Liu J."/>
            <person name="Liuni S."/>
            <person name="McWilliam S."/>
            <person name="Madan Babu M."/>
            <person name="Madera M."/>
            <person name="Marchionni L."/>
            <person name="Matsuda H."/>
            <person name="Matsuzawa S."/>
            <person name="Miki H."/>
            <person name="Mignone F."/>
            <person name="Miyake S."/>
            <person name="Morris K."/>
            <person name="Mottagui-Tabar S."/>
            <person name="Mulder N."/>
            <person name="Nakano N."/>
            <person name="Nakauchi H."/>
            <person name="Ng P."/>
            <person name="Nilsson R."/>
            <person name="Nishiguchi S."/>
            <person name="Nishikawa S."/>
            <person name="Nori F."/>
            <person name="Ohara O."/>
            <person name="Okazaki Y."/>
            <person name="Orlando V."/>
            <person name="Pang K.C."/>
            <person name="Pavan W.J."/>
            <person name="Pavesi G."/>
            <person name="Pesole G."/>
            <person name="Petrovsky N."/>
            <person name="Piazza S."/>
            <person name="Reed J."/>
            <person name="Reid J.F."/>
            <person name="Ring B.Z."/>
            <person name="Ringwald M."/>
            <person name="Rost B."/>
            <person name="Ruan Y."/>
            <person name="Salzberg S.L."/>
            <person name="Sandelin A."/>
            <person name="Schneider C."/>
            <person name="Schoenbach C."/>
            <person name="Sekiguchi K."/>
            <person name="Semple C.A."/>
            <person name="Seno S."/>
            <person name="Sessa L."/>
            <person name="Sheng Y."/>
            <person name="Shibata Y."/>
            <person name="Shimada H."/>
            <person name="Shimada K."/>
            <person name="Silva D."/>
            <person name="Sinclair B."/>
            <person name="Sperling S."/>
            <person name="Stupka E."/>
            <person name="Sugiura K."/>
            <person name="Sultana R."/>
            <person name="Takenaka Y."/>
            <person name="Taki K."/>
            <person name="Tammoja K."/>
            <person name="Tan S.L."/>
            <person name="Tang S."/>
            <person name="Taylor M.S."/>
            <person name="Tegner J."/>
            <person name="Teichmann S.A."/>
            <person name="Ueda H.R."/>
            <person name="van Nimwegen E."/>
            <person name="Verardo R."/>
            <person name="Wei C.L."/>
            <person name="Yagi K."/>
            <person name="Yamanishi H."/>
            <person name="Zabarovsky E."/>
            <person name="Zhu S."/>
            <person name="Zimmer A."/>
            <person name="Hide W."/>
            <person name="Bult C."/>
            <person name="Grimmond S.M."/>
            <person name="Teasdale R.D."/>
            <person name="Liu E.T."/>
            <person name="Brusic V."/>
            <person name="Quackenbush J."/>
            <person name="Wahlestedt C."/>
            <person name="Mattick J.S."/>
            <person name="Hume D.A."/>
            <person name="Kai C."/>
            <person name="Sasaki D."/>
            <person name="Tomaru Y."/>
            <person name="Fukuda S."/>
            <person name="Kanamori-Katayama M."/>
            <person name="Suzuki M."/>
            <person name="Aoki J."/>
            <person name="Arakawa T."/>
            <person name="Iida J."/>
            <person name="Imamura K."/>
            <person name="Itoh M."/>
            <person name="Kato T."/>
            <person name="Kawaji H."/>
            <person name="Kawagashira N."/>
            <person name="Kawashima T."/>
            <person name="Kojima M."/>
            <person name="Kondo S."/>
            <person name="Konno H."/>
            <person name="Nakano K."/>
            <person name="Ninomiya N."/>
            <person name="Nishio T."/>
            <person name="Okada M."/>
            <person name="Plessy C."/>
            <person name="Shibata K."/>
            <person name="Shiraki T."/>
            <person name="Suzuki S."/>
            <person name="Tagami M."/>
            <person name="Waki K."/>
            <person name="Watahiki A."/>
            <person name="Okamura-Oho Y."/>
            <person name="Suzuki H."/>
            <person name="Kawai J."/>
            <person name="Hayashizaki Y."/>
        </authorList>
    </citation>
    <scope>NUCLEOTIDE SEQUENCE [LARGE SCALE MRNA] (ISOFORM 1)</scope>
    <source>
        <strain>DBA/2J</strain>
    </source>
</reference>
<reference key="5">
    <citation type="submission" date="2005-09" db="EMBL/GenBank/DDBJ databases">
        <authorList>
            <person name="Mural R.J."/>
            <person name="Adams M.D."/>
            <person name="Myers E.W."/>
            <person name="Smith H.O."/>
            <person name="Venter J.C."/>
        </authorList>
    </citation>
    <scope>NUCLEOTIDE SEQUENCE [LARGE SCALE GENOMIC DNA]</scope>
</reference>
<reference key="6">
    <citation type="journal article" date="2004" name="Genome Res.">
        <title>The status, quality, and expansion of the NIH full-length cDNA project: the Mammalian Gene Collection (MGC).</title>
        <authorList>
            <consortium name="The MGC Project Team"/>
        </authorList>
    </citation>
    <scope>NUCLEOTIDE SEQUENCE [LARGE SCALE MRNA] (ISOFORM 1)</scope>
    <source>
        <strain>C3H/He</strain>
        <strain>Czech II</strain>
        <tissue>Mammary tumor</tissue>
        <tissue>Osteoblast</tissue>
    </source>
</reference>
<reference key="7">
    <citation type="journal article" date="2002" name="Curr. Biol.">
        <title>Immunoglobulin isotype switching is inhibited and somatic hypermutation perturbed in UNG-deficient mice.</title>
        <authorList>
            <person name="Rada C."/>
            <person name="Williams G.T."/>
            <person name="Nilsen H."/>
            <person name="Barnes D.E."/>
            <person name="Lindahl T."/>
            <person name="Neuberger M.S."/>
        </authorList>
    </citation>
    <scope>FUNCTION</scope>
</reference>
<reference key="8">
    <citation type="journal article" date="2005" name="J. Exp. Med.">
        <title>Inducible DNA breaks in Ig S regions are dependent on AID and UNG.</title>
        <authorList>
            <person name="Schrader C.E."/>
            <person name="Linehan E.K."/>
            <person name="Mochegova S.N."/>
            <person name="Woodland R.T."/>
            <person name="Stavnezer J."/>
        </authorList>
    </citation>
    <scope>FUNCTION</scope>
</reference>
<reference key="9">
    <citation type="journal article" date="2010" name="Cell">
        <title>A tissue-specific atlas of mouse protein phosphorylation and expression.</title>
        <authorList>
            <person name="Huttlin E.L."/>
            <person name="Jedrychowski M.P."/>
            <person name="Elias J.E."/>
            <person name="Goswami T."/>
            <person name="Rad R."/>
            <person name="Beausoleil S.A."/>
            <person name="Villen J."/>
            <person name="Haas W."/>
            <person name="Sowa M.E."/>
            <person name="Gygi S.P."/>
        </authorList>
    </citation>
    <scope>PHOSPHORYLATION [LARGE SCALE ANALYSIS] AT SER-43</scope>
    <scope>IDENTIFICATION BY MASS SPECTROMETRY [LARGE SCALE ANALYSIS]</scope>
    <source>
        <tissue>Spleen</tissue>
        <tissue>Testis</tissue>
    </source>
</reference>
<reference key="10">
    <citation type="journal article" date="2011" name="Nat. Immunol.">
        <title>Uracil residues dependent on the deaminase AID in immunoglobulin gene variable and switch regions.</title>
        <authorList>
            <person name="Maul R.W."/>
            <person name="Saribasak H."/>
            <person name="Martomo S.A."/>
            <person name="McClure R.L."/>
            <person name="Yang W."/>
            <person name="Vaisman A."/>
            <person name="Gramlich H.S."/>
            <person name="Schatz D.G."/>
            <person name="Woodgate R."/>
            <person name="Wilson D.M. III"/>
            <person name="Gearhart P.J."/>
        </authorList>
    </citation>
    <scope>FUNCTION</scope>
</reference>
<reference key="11">
    <citation type="journal article" date="2012" name="DNA Repair">
        <title>The UNG2 Arg88Cys variant abrogates RPA-mediated recruitment of UNG2 to single-stranded DNA.</title>
        <authorList>
            <person name="Torseth K."/>
            <person name="Doseth B."/>
            <person name="Hagen L."/>
            <person name="Olaisen C."/>
            <person name="Liabakk N.B."/>
            <person name="Graesmann H."/>
            <person name="Durandy A."/>
            <person name="Otterlei M."/>
            <person name="Krokan H.E."/>
            <person name="Kavli B."/>
            <person name="Slupphaug G."/>
        </authorList>
    </citation>
    <scope>FUNCTION</scope>
    <scope>CATALYTIC ACTIVITY</scope>
    <scope>MUTAGENESIS OF ARG-66; ARG-69; ASN-70; LYS-71; ARG-77 AND ARG-81</scope>
</reference>
<protein>
    <recommendedName>
        <fullName evidence="2">Uracil-DNA glycosylase</fullName>
        <shortName evidence="2">UDG</shortName>
        <ecNumber evidence="2">3.2.2.27</ecNumber>
    </recommendedName>
</protein>
<dbReference type="EC" id="3.2.2.27" evidence="2"/>
<dbReference type="EMBL" id="U55040">
    <property type="protein sequence ID" value="AAB39511.1"/>
    <property type="molecule type" value="Genomic_DNA"/>
</dbReference>
<dbReference type="EMBL" id="U55041">
    <property type="protein sequence ID" value="AAC53197.1"/>
    <property type="molecule type" value="mRNA"/>
</dbReference>
<dbReference type="EMBL" id="X99018">
    <property type="protein sequence ID" value="CAA67489.1"/>
    <property type="molecule type" value="mRNA"/>
</dbReference>
<dbReference type="EMBL" id="Y08975">
    <property type="protein sequence ID" value="CAA70168.1"/>
    <property type="molecule type" value="mRNA"/>
</dbReference>
<dbReference type="EMBL" id="AF174485">
    <property type="protein sequence ID" value="AAF76936.1"/>
    <property type="molecule type" value="Genomic_DNA"/>
</dbReference>
<dbReference type="EMBL" id="AK146178">
    <property type="protein sequence ID" value="BAE26956.1"/>
    <property type="molecule type" value="mRNA"/>
</dbReference>
<dbReference type="EMBL" id="CH466529">
    <property type="protein sequence ID" value="EDL19920.1"/>
    <property type="molecule type" value="Genomic_DNA"/>
</dbReference>
<dbReference type="EMBL" id="BC011039">
    <property type="protein sequence ID" value="AAH11039.1"/>
    <property type="molecule type" value="mRNA"/>
</dbReference>
<dbReference type="EMBL" id="BC052853">
    <property type="protein sequence ID" value="AAH52853.1"/>
    <property type="molecule type" value="mRNA"/>
</dbReference>
<dbReference type="CCDS" id="CCDS19560.1">
    <molecule id="P97931-2"/>
</dbReference>
<dbReference type="CCDS" id="CCDS39221.1">
    <molecule id="P97931-1"/>
</dbReference>
<dbReference type="RefSeq" id="NP_001035781.1">
    <molecule id="P97931-1"/>
    <property type="nucleotide sequence ID" value="NM_001040691.1"/>
</dbReference>
<dbReference type="RefSeq" id="NP_035807.2">
    <molecule id="P97931-2"/>
    <property type="nucleotide sequence ID" value="NM_011677.2"/>
</dbReference>
<dbReference type="SMR" id="P97931"/>
<dbReference type="BioGRID" id="204447">
    <property type="interactions" value="1"/>
</dbReference>
<dbReference type="FunCoup" id="P97931">
    <property type="interactions" value="1897"/>
</dbReference>
<dbReference type="IntAct" id="P97931">
    <property type="interactions" value="1"/>
</dbReference>
<dbReference type="STRING" id="10090.ENSMUSP00000031587"/>
<dbReference type="iPTMnet" id="P97931"/>
<dbReference type="PhosphoSitePlus" id="P97931"/>
<dbReference type="PaxDb" id="10090-ENSMUSP00000031587"/>
<dbReference type="PeptideAtlas" id="P97931"/>
<dbReference type="ProteomicsDB" id="297969">
    <molecule id="P97931-1"/>
</dbReference>
<dbReference type="ProteomicsDB" id="297970">
    <molecule id="P97931-2"/>
</dbReference>
<dbReference type="Antibodypedia" id="3173">
    <property type="antibodies" value="564 antibodies from 36 providers"/>
</dbReference>
<dbReference type="DNASU" id="22256"/>
<dbReference type="Ensembl" id="ENSMUST00000031587.13">
    <molecule id="P97931-1"/>
    <property type="protein sequence ID" value="ENSMUSP00000031587.7"/>
    <property type="gene ID" value="ENSMUSG00000029591.15"/>
</dbReference>
<dbReference type="Ensembl" id="ENSMUST00000102584.11">
    <molecule id="P97931-2"/>
    <property type="protein sequence ID" value="ENSMUSP00000099644.5"/>
    <property type="gene ID" value="ENSMUSG00000029591.15"/>
</dbReference>
<dbReference type="GeneID" id="22256"/>
<dbReference type="KEGG" id="mmu:22256"/>
<dbReference type="UCSC" id="uc008yzf.1">
    <molecule id="P97931-1"/>
    <property type="organism name" value="mouse"/>
</dbReference>
<dbReference type="AGR" id="MGI:109352"/>
<dbReference type="CTD" id="7374"/>
<dbReference type="MGI" id="MGI:109352">
    <property type="gene designation" value="Ung"/>
</dbReference>
<dbReference type="VEuPathDB" id="HostDB:ENSMUSG00000029591"/>
<dbReference type="eggNOG" id="KOG2994">
    <property type="taxonomic scope" value="Eukaryota"/>
</dbReference>
<dbReference type="GeneTree" id="ENSGT00390000003405"/>
<dbReference type="HOGENOM" id="CLU_032162_2_1_1"/>
<dbReference type="InParanoid" id="P97931"/>
<dbReference type="OMA" id="PDNGYLM"/>
<dbReference type="OrthoDB" id="10031947at2759"/>
<dbReference type="PhylomeDB" id="P97931"/>
<dbReference type="TreeFam" id="TF315028"/>
<dbReference type="Reactome" id="R-MMU-110329">
    <property type="pathway name" value="Cleavage of the damaged pyrimidine"/>
</dbReference>
<dbReference type="Reactome" id="R-MMU-110357">
    <property type="pathway name" value="Displacement of DNA glycosylase by APEX1"/>
</dbReference>
<dbReference type="BioGRID-ORCS" id="22256">
    <property type="hits" value="5 hits in 114 CRISPR screens"/>
</dbReference>
<dbReference type="ChiTaRS" id="Ung">
    <property type="organism name" value="mouse"/>
</dbReference>
<dbReference type="PRO" id="PR:P97931"/>
<dbReference type="Proteomes" id="UP000000589">
    <property type="component" value="Chromosome 5"/>
</dbReference>
<dbReference type="RNAct" id="P97931">
    <property type="molecule type" value="protein"/>
</dbReference>
<dbReference type="Bgee" id="ENSMUSG00000029591">
    <property type="expression patterns" value="Expressed in indifferent gonad and 245 other cell types or tissues"/>
</dbReference>
<dbReference type="ExpressionAtlas" id="P97931">
    <property type="expression patterns" value="baseline and differential"/>
</dbReference>
<dbReference type="GO" id="GO:0005739">
    <property type="term" value="C:mitochondrion"/>
    <property type="evidence" value="ECO:0000314"/>
    <property type="project" value="MGI"/>
</dbReference>
<dbReference type="GO" id="GO:0005654">
    <property type="term" value="C:nucleoplasm"/>
    <property type="evidence" value="ECO:0000304"/>
    <property type="project" value="Reactome"/>
</dbReference>
<dbReference type="GO" id="GO:0005634">
    <property type="term" value="C:nucleus"/>
    <property type="evidence" value="ECO:0000314"/>
    <property type="project" value="MGI"/>
</dbReference>
<dbReference type="GO" id="GO:0003684">
    <property type="term" value="F:damaged DNA binding"/>
    <property type="evidence" value="ECO:0007669"/>
    <property type="project" value="Ensembl"/>
</dbReference>
<dbReference type="GO" id="GO:0043024">
    <property type="term" value="F:ribosomal small subunit binding"/>
    <property type="evidence" value="ECO:0007669"/>
    <property type="project" value="Ensembl"/>
</dbReference>
<dbReference type="GO" id="GO:0004844">
    <property type="term" value="F:uracil DNA N-glycosylase activity"/>
    <property type="evidence" value="ECO:0000314"/>
    <property type="project" value="MGI"/>
</dbReference>
<dbReference type="GO" id="GO:0097510">
    <property type="term" value="P:base-excision repair, AP site formation via deaminated base removal"/>
    <property type="evidence" value="ECO:0007669"/>
    <property type="project" value="Ensembl"/>
</dbReference>
<dbReference type="GO" id="GO:0006281">
    <property type="term" value="P:DNA repair"/>
    <property type="evidence" value="ECO:0000304"/>
    <property type="project" value="MGI"/>
</dbReference>
<dbReference type="GO" id="GO:0045190">
    <property type="term" value="P:isotype switching"/>
    <property type="evidence" value="ECO:0000316"/>
    <property type="project" value="MGI"/>
</dbReference>
<dbReference type="GO" id="GO:0016446">
    <property type="term" value="P:somatic hypermutation of immunoglobulin genes"/>
    <property type="evidence" value="ECO:0000315"/>
    <property type="project" value="MGI"/>
</dbReference>
<dbReference type="GO" id="GO:0016447">
    <property type="term" value="P:somatic recombination of immunoglobulin gene segments"/>
    <property type="evidence" value="ECO:0000315"/>
    <property type="project" value="MGI"/>
</dbReference>
<dbReference type="CDD" id="cd10027">
    <property type="entry name" value="UDG-F1-like"/>
    <property type="match status" value="1"/>
</dbReference>
<dbReference type="FunFam" id="3.40.470.10:FF:000004">
    <property type="entry name" value="Uracil-DNA glycosylase"/>
    <property type="match status" value="1"/>
</dbReference>
<dbReference type="Gene3D" id="3.40.470.10">
    <property type="entry name" value="Uracil-DNA glycosylase-like domain"/>
    <property type="match status" value="1"/>
</dbReference>
<dbReference type="HAMAP" id="MF_00148">
    <property type="entry name" value="UDG"/>
    <property type="match status" value="1"/>
</dbReference>
<dbReference type="InterPro" id="IPR002043">
    <property type="entry name" value="UDG_fam1"/>
</dbReference>
<dbReference type="InterPro" id="IPR018085">
    <property type="entry name" value="Ura-DNA_Glyclase_AS"/>
</dbReference>
<dbReference type="InterPro" id="IPR005122">
    <property type="entry name" value="Uracil-DNA_glycosylase-like"/>
</dbReference>
<dbReference type="InterPro" id="IPR036895">
    <property type="entry name" value="Uracil-DNA_glycosylase-like_sf"/>
</dbReference>
<dbReference type="NCBIfam" id="NF003588">
    <property type="entry name" value="PRK05254.1-1"/>
    <property type="match status" value="1"/>
</dbReference>
<dbReference type="NCBIfam" id="NF003589">
    <property type="entry name" value="PRK05254.1-2"/>
    <property type="match status" value="1"/>
</dbReference>
<dbReference type="NCBIfam" id="NF003591">
    <property type="entry name" value="PRK05254.1-4"/>
    <property type="match status" value="1"/>
</dbReference>
<dbReference type="NCBIfam" id="NF003592">
    <property type="entry name" value="PRK05254.1-5"/>
    <property type="match status" value="1"/>
</dbReference>
<dbReference type="NCBIfam" id="TIGR00628">
    <property type="entry name" value="ung"/>
    <property type="match status" value="1"/>
</dbReference>
<dbReference type="PANTHER" id="PTHR11264">
    <property type="entry name" value="URACIL-DNA GLYCOSYLASE"/>
    <property type="match status" value="1"/>
</dbReference>
<dbReference type="PANTHER" id="PTHR11264:SF0">
    <property type="entry name" value="URACIL-DNA GLYCOSYLASE"/>
    <property type="match status" value="1"/>
</dbReference>
<dbReference type="Pfam" id="PF03167">
    <property type="entry name" value="UDG"/>
    <property type="match status" value="1"/>
</dbReference>
<dbReference type="SMART" id="SM00986">
    <property type="entry name" value="UDG"/>
    <property type="match status" value="1"/>
</dbReference>
<dbReference type="SMART" id="SM00987">
    <property type="entry name" value="UreE_C"/>
    <property type="match status" value="1"/>
</dbReference>
<dbReference type="SUPFAM" id="SSF52141">
    <property type="entry name" value="Uracil-DNA glycosylase-like"/>
    <property type="match status" value="1"/>
</dbReference>
<dbReference type="PROSITE" id="PS00130">
    <property type="entry name" value="U_DNA_GLYCOSYLASE"/>
    <property type="match status" value="1"/>
</dbReference>
<name>UNG_MOUSE</name>